<evidence type="ECO:0000255" key="1">
    <source>
        <dbReference type="HAMAP-Rule" id="MF_01849"/>
    </source>
</evidence>
<evidence type="ECO:0000255" key="2">
    <source>
        <dbReference type="PROSITE-ProRule" id="PRU01266"/>
    </source>
</evidence>
<gene>
    <name evidence="1" type="primary">rlmN</name>
    <name type="ordered locus">SA1061</name>
</gene>
<feature type="chain" id="PRO_0000350436" description="Probable dual-specificity RNA methyltransferase RlmN">
    <location>
        <begin position="1"/>
        <end position="364"/>
    </location>
</feature>
<feature type="domain" description="Radical SAM core" evidence="2">
    <location>
        <begin position="113"/>
        <end position="346"/>
    </location>
</feature>
<feature type="active site" description="Proton acceptor" evidence="1">
    <location>
        <position position="107"/>
    </location>
</feature>
<feature type="active site" description="S-methylcysteine intermediate" evidence="1">
    <location>
        <position position="351"/>
    </location>
</feature>
<feature type="binding site" evidence="1">
    <location>
        <position position="127"/>
    </location>
    <ligand>
        <name>[4Fe-4S] cluster</name>
        <dbReference type="ChEBI" id="CHEBI:49883"/>
        <note>4Fe-4S-S-AdoMet</note>
    </ligand>
</feature>
<feature type="binding site" evidence="1">
    <location>
        <position position="131"/>
    </location>
    <ligand>
        <name>[4Fe-4S] cluster</name>
        <dbReference type="ChEBI" id="CHEBI:49883"/>
        <note>4Fe-4S-S-AdoMet</note>
    </ligand>
</feature>
<feature type="binding site" evidence="1">
    <location>
        <position position="134"/>
    </location>
    <ligand>
        <name>[4Fe-4S] cluster</name>
        <dbReference type="ChEBI" id="CHEBI:49883"/>
        <note>4Fe-4S-S-AdoMet</note>
    </ligand>
</feature>
<feature type="binding site" evidence="1">
    <location>
        <begin position="177"/>
        <end position="178"/>
    </location>
    <ligand>
        <name>S-adenosyl-L-methionine</name>
        <dbReference type="ChEBI" id="CHEBI:59789"/>
    </ligand>
</feature>
<feature type="binding site" evidence="1">
    <location>
        <position position="209"/>
    </location>
    <ligand>
        <name>S-adenosyl-L-methionine</name>
        <dbReference type="ChEBI" id="CHEBI:59789"/>
    </ligand>
</feature>
<feature type="binding site" evidence="1">
    <location>
        <begin position="232"/>
        <end position="234"/>
    </location>
    <ligand>
        <name>S-adenosyl-L-methionine</name>
        <dbReference type="ChEBI" id="CHEBI:59789"/>
    </ligand>
</feature>
<feature type="binding site" evidence="1">
    <location>
        <position position="308"/>
    </location>
    <ligand>
        <name>S-adenosyl-L-methionine</name>
        <dbReference type="ChEBI" id="CHEBI:59789"/>
    </ligand>
</feature>
<feature type="disulfide bond" description="(transient)" evidence="1">
    <location>
        <begin position="120"/>
        <end position="351"/>
    </location>
</feature>
<proteinExistence type="evidence at protein level"/>
<reference key="1">
    <citation type="journal article" date="2001" name="Lancet">
        <title>Whole genome sequencing of meticillin-resistant Staphylococcus aureus.</title>
        <authorList>
            <person name="Kuroda M."/>
            <person name="Ohta T."/>
            <person name="Uchiyama I."/>
            <person name="Baba T."/>
            <person name="Yuzawa H."/>
            <person name="Kobayashi I."/>
            <person name="Cui L."/>
            <person name="Oguchi A."/>
            <person name="Aoki K."/>
            <person name="Nagai Y."/>
            <person name="Lian J.-Q."/>
            <person name="Ito T."/>
            <person name="Kanamori M."/>
            <person name="Matsumaru H."/>
            <person name="Maruyama A."/>
            <person name="Murakami H."/>
            <person name="Hosoyama A."/>
            <person name="Mizutani-Ui Y."/>
            <person name="Takahashi N.K."/>
            <person name="Sawano T."/>
            <person name="Inoue R."/>
            <person name="Kaito C."/>
            <person name="Sekimizu K."/>
            <person name="Hirakawa H."/>
            <person name="Kuhara S."/>
            <person name="Goto S."/>
            <person name="Yabuzaki J."/>
            <person name="Kanehisa M."/>
            <person name="Yamashita A."/>
            <person name="Oshima K."/>
            <person name="Furuya K."/>
            <person name="Yoshino C."/>
            <person name="Shiba T."/>
            <person name="Hattori M."/>
            <person name="Ogasawara N."/>
            <person name="Hayashi H."/>
            <person name="Hiramatsu K."/>
        </authorList>
    </citation>
    <scope>NUCLEOTIDE SEQUENCE [LARGE SCALE GENOMIC DNA]</scope>
    <source>
        <strain>N315</strain>
    </source>
</reference>
<reference key="2">
    <citation type="submission" date="2007-10" db="UniProtKB">
        <title>Shotgun proteomic analysis of total and membrane protein extracts of S. aureus strain N315.</title>
        <authorList>
            <person name="Vaezzadeh A.R."/>
            <person name="Deshusses J."/>
            <person name="Lescuyer P."/>
            <person name="Hochstrasser D.F."/>
        </authorList>
    </citation>
    <scope>IDENTIFICATION BY MASS SPECTROMETRY [LARGE SCALE ANALYSIS]</scope>
    <source>
        <strain>N315</strain>
    </source>
</reference>
<accession>Q7A600</accession>
<dbReference type="EC" id="2.1.1.192" evidence="1"/>
<dbReference type="EMBL" id="BA000018">
    <property type="protein sequence ID" value="BAB42313.1"/>
    <property type="molecule type" value="Genomic_DNA"/>
</dbReference>
<dbReference type="PIR" id="E89894">
    <property type="entry name" value="E89894"/>
</dbReference>
<dbReference type="RefSeq" id="WP_000626897.1">
    <property type="nucleotide sequence ID" value="NC_002745.2"/>
</dbReference>
<dbReference type="SMR" id="Q7A600"/>
<dbReference type="EnsemblBacteria" id="BAB42313">
    <property type="protein sequence ID" value="BAB42313"/>
    <property type="gene ID" value="BAB42313"/>
</dbReference>
<dbReference type="KEGG" id="sau:SA1061"/>
<dbReference type="HOGENOM" id="CLU_029101_0_1_9"/>
<dbReference type="GO" id="GO:0005737">
    <property type="term" value="C:cytoplasm"/>
    <property type="evidence" value="ECO:0007669"/>
    <property type="project" value="UniProtKB-SubCell"/>
</dbReference>
<dbReference type="GO" id="GO:0051539">
    <property type="term" value="F:4 iron, 4 sulfur cluster binding"/>
    <property type="evidence" value="ECO:0007669"/>
    <property type="project" value="UniProtKB-UniRule"/>
</dbReference>
<dbReference type="GO" id="GO:0046872">
    <property type="term" value="F:metal ion binding"/>
    <property type="evidence" value="ECO:0007669"/>
    <property type="project" value="UniProtKB-KW"/>
</dbReference>
<dbReference type="GO" id="GO:0070040">
    <property type="term" value="F:rRNA (adenine(2503)-C2-)-methyltransferase activity"/>
    <property type="evidence" value="ECO:0007669"/>
    <property type="project" value="UniProtKB-UniRule"/>
</dbReference>
<dbReference type="GO" id="GO:0019843">
    <property type="term" value="F:rRNA binding"/>
    <property type="evidence" value="ECO:0007669"/>
    <property type="project" value="UniProtKB-UniRule"/>
</dbReference>
<dbReference type="GO" id="GO:0002935">
    <property type="term" value="F:tRNA (adenine(37)-C2)-methyltransferase activity"/>
    <property type="evidence" value="ECO:0007669"/>
    <property type="project" value="UniProtKB-UniRule"/>
</dbReference>
<dbReference type="GO" id="GO:0000049">
    <property type="term" value="F:tRNA binding"/>
    <property type="evidence" value="ECO:0007669"/>
    <property type="project" value="UniProtKB-UniRule"/>
</dbReference>
<dbReference type="GO" id="GO:0046677">
    <property type="term" value="P:response to antibiotic"/>
    <property type="evidence" value="ECO:0007669"/>
    <property type="project" value="UniProtKB-KW"/>
</dbReference>
<dbReference type="GO" id="GO:0070475">
    <property type="term" value="P:rRNA base methylation"/>
    <property type="evidence" value="ECO:0007669"/>
    <property type="project" value="UniProtKB-UniRule"/>
</dbReference>
<dbReference type="GO" id="GO:0030488">
    <property type="term" value="P:tRNA methylation"/>
    <property type="evidence" value="ECO:0007669"/>
    <property type="project" value="UniProtKB-UniRule"/>
</dbReference>
<dbReference type="CDD" id="cd01335">
    <property type="entry name" value="Radical_SAM"/>
    <property type="match status" value="1"/>
</dbReference>
<dbReference type="FunFam" id="1.10.150.530:FF:000002">
    <property type="entry name" value="Probable dual-specificity RNA methyltransferase RlmN"/>
    <property type="match status" value="1"/>
</dbReference>
<dbReference type="FunFam" id="3.20.20.70:FF:000014">
    <property type="entry name" value="Probable dual-specificity RNA methyltransferase RlmN"/>
    <property type="match status" value="1"/>
</dbReference>
<dbReference type="Gene3D" id="1.10.150.530">
    <property type="match status" value="1"/>
</dbReference>
<dbReference type="Gene3D" id="3.20.20.70">
    <property type="entry name" value="Aldolase class I"/>
    <property type="match status" value="1"/>
</dbReference>
<dbReference type="HAMAP" id="MF_01849">
    <property type="entry name" value="RNA_methyltr_RlmN"/>
    <property type="match status" value="1"/>
</dbReference>
<dbReference type="InterPro" id="IPR013785">
    <property type="entry name" value="Aldolase_TIM"/>
</dbReference>
<dbReference type="InterPro" id="IPR040072">
    <property type="entry name" value="Methyltransferase_A"/>
</dbReference>
<dbReference type="InterPro" id="IPR048641">
    <property type="entry name" value="RlmN_N"/>
</dbReference>
<dbReference type="InterPro" id="IPR027492">
    <property type="entry name" value="RNA_MTrfase_RlmN"/>
</dbReference>
<dbReference type="InterPro" id="IPR004383">
    <property type="entry name" value="rRNA_lsu_MTrfase_RlmN/Cfr"/>
</dbReference>
<dbReference type="InterPro" id="IPR007197">
    <property type="entry name" value="rSAM"/>
</dbReference>
<dbReference type="NCBIfam" id="TIGR00048">
    <property type="entry name" value="rRNA_mod_RlmN"/>
    <property type="match status" value="1"/>
</dbReference>
<dbReference type="PANTHER" id="PTHR30544">
    <property type="entry name" value="23S RRNA METHYLTRANSFERASE"/>
    <property type="match status" value="1"/>
</dbReference>
<dbReference type="PANTHER" id="PTHR30544:SF5">
    <property type="entry name" value="RADICAL SAM CORE DOMAIN-CONTAINING PROTEIN"/>
    <property type="match status" value="1"/>
</dbReference>
<dbReference type="Pfam" id="PF04055">
    <property type="entry name" value="Radical_SAM"/>
    <property type="match status" value="1"/>
</dbReference>
<dbReference type="Pfam" id="PF21016">
    <property type="entry name" value="RlmN_N"/>
    <property type="match status" value="1"/>
</dbReference>
<dbReference type="PIRSF" id="PIRSF006004">
    <property type="entry name" value="CHP00048"/>
    <property type="match status" value="1"/>
</dbReference>
<dbReference type="SFLD" id="SFLDF00275">
    <property type="entry name" value="adenosine_C2_methyltransferase"/>
    <property type="match status" value="1"/>
</dbReference>
<dbReference type="SFLD" id="SFLDG01062">
    <property type="entry name" value="methyltransferase_(Class_A)"/>
    <property type="match status" value="1"/>
</dbReference>
<dbReference type="SUPFAM" id="SSF102114">
    <property type="entry name" value="Radical SAM enzymes"/>
    <property type="match status" value="1"/>
</dbReference>
<dbReference type="PROSITE" id="PS51918">
    <property type="entry name" value="RADICAL_SAM"/>
    <property type="match status" value="1"/>
</dbReference>
<sequence>MITAEKKKKNKFLPNFDKQSIYSLRFDEMQNWLVEQGQQKFRAKQIFEWLYQKRVDSIDEMTNLSKDLRQLLKDNFTVTTLTTVVKQESKDGTIKFLFELQDGYTIETVLMRHDYGNSVCVTTQVGCRIGCTFCASTLGGLKRNLEAGEIVSQVLTVQKALDATEERVSQIVIMGIGEPFENYDEMMDFLRIVNDDNSLNIGARHITVSTSGIIPRIYDFADEDIQINFAVSLHAAKDEVRSRLMPINRAYNVEKLIEAIQYYQEKTNRRVTFEYGLFGGVNDQLEHARELAHLIKGLNCHVNLIPVNHVPERNYVKTAKNDIFKFEKELKRLGINATIRREQGSDIDAACGQLRAKERQVETR</sequence>
<name>RLMN_STAAN</name>
<keyword id="KW-0004">4Fe-4S</keyword>
<keyword id="KW-0046">Antibiotic resistance</keyword>
<keyword id="KW-0963">Cytoplasm</keyword>
<keyword id="KW-1015">Disulfide bond</keyword>
<keyword id="KW-0408">Iron</keyword>
<keyword id="KW-0411">Iron-sulfur</keyword>
<keyword id="KW-0479">Metal-binding</keyword>
<keyword id="KW-0489">Methyltransferase</keyword>
<keyword id="KW-0698">rRNA processing</keyword>
<keyword id="KW-0949">S-adenosyl-L-methionine</keyword>
<keyword id="KW-0808">Transferase</keyword>
<keyword id="KW-0819">tRNA processing</keyword>
<protein>
    <recommendedName>
        <fullName evidence="1">Probable dual-specificity RNA methyltransferase RlmN</fullName>
        <ecNumber evidence="1">2.1.1.192</ecNumber>
    </recommendedName>
    <alternativeName>
        <fullName evidence="1">23S rRNA (adenine(2503)-C(2))-methyltransferase</fullName>
    </alternativeName>
    <alternativeName>
        <fullName evidence="1">23S rRNA m2A2503 methyltransferase</fullName>
    </alternativeName>
    <alternativeName>
        <fullName evidence="1">Ribosomal RNA large subunit methyltransferase N</fullName>
    </alternativeName>
    <alternativeName>
        <fullName evidence="1">tRNA (adenine(37)-C(2))-methyltransferase</fullName>
    </alternativeName>
    <alternativeName>
        <fullName evidence="1">tRNA m2A37 methyltransferase</fullName>
    </alternativeName>
</protein>
<organism>
    <name type="scientific">Staphylococcus aureus (strain N315)</name>
    <dbReference type="NCBI Taxonomy" id="158879"/>
    <lineage>
        <taxon>Bacteria</taxon>
        <taxon>Bacillati</taxon>
        <taxon>Bacillota</taxon>
        <taxon>Bacilli</taxon>
        <taxon>Bacillales</taxon>
        <taxon>Staphylococcaceae</taxon>
        <taxon>Staphylococcus</taxon>
    </lineage>
</organism>
<comment type="function">
    <text evidence="1">Specifically methylates position 2 of adenine 2503 in 23S rRNA and position 2 of adenine 37 in tRNAs. Confers resistance to some classes of antibiotics.</text>
</comment>
<comment type="catalytic activity">
    <reaction evidence="1">
        <text>adenosine(2503) in 23S rRNA + 2 reduced [2Fe-2S]-[ferredoxin] + 2 S-adenosyl-L-methionine = 2-methyladenosine(2503) in 23S rRNA + 5'-deoxyadenosine + L-methionine + 2 oxidized [2Fe-2S]-[ferredoxin] + S-adenosyl-L-homocysteine</text>
        <dbReference type="Rhea" id="RHEA:42916"/>
        <dbReference type="Rhea" id="RHEA-COMP:10000"/>
        <dbReference type="Rhea" id="RHEA-COMP:10001"/>
        <dbReference type="Rhea" id="RHEA-COMP:10152"/>
        <dbReference type="Rhea" id="RHEA-COMP:10282"/>
        <dbReference type="ChEBI" id="CHEBI:17319"/>
        <dbReference type="ChEBI" id="CHEBI:33737"/>
        <dbReference type="ChEBI" id="CHEBI:33738"/>
        <dbReference type="ChEBI" id="CHEBI:57844"/>
        <dbReference type="ChEBI" id="CHEBI:57856"/>
        <dbReference type="ChEBI" id="CHEBI:59789"/>
        <dbReference type="ChEBI" id="CHEBI:74411"/>
        <dbReference type="ChEBI" id="CHEBI:74497"/>
        <dbReference type="EC" id="2.1.1.192"/>
    </reaction>
</comment>
<comment type="catalytic activity">
    <reaction evidence="1">
        <text>adenosine(37) in tRNA + 2 reduced [2Fe-2S]-[ferredoxin] + 2 S-adenosyl-L-methionine = 2-methyladenosine(37) in tRNA + 5'-deoxyadenosine + L-methionine + 2 oxidized [2Fe-2S]-[ferredoxin] + S-adenosyl-L-homocysteine</text>
        <dbReference type="Rhea" id="RHEA:43332"/>
        <dbReference type="Rhea" id="RHEA-COMP:10000"/>
        <dbReference type="Rhea" id="RHEA-COMP:10001"/>
        <dbReference type="Rhea" id="RHEA-COMP:10162"/>
        <dbReference type="Rhea" id="RHEA-COMP:10485"/>
        <dbReference type="ChEBI" id="CHEBI:17319"/>
        <dbReference type="ChEBI" id="CHEBI:33737"/>
        <dbReference type="ChEBI" id="CHEBI:33738"/>
        <dbReference type="ChEBI" id="CHEBI:57844"/>
        <dbReference type="ChEBI" id="CHEBI:57856"/>
        <dbReference type="ChEBI" id="CHEBI:59789"/>
        <dbReference type="ChEBI" id="CHEBI:74411"/>
        <dbReference type="ChEBI" id="CHEBI:74497"/>
        <dbReference type="EC" id="2.1.1.192"/>
    </reaction>
</comment>
<comment type="cofactor">
    <cofactor evidence="1">
        <name>[4Fe-4S] cluster</name>
        <dbReference type="ChEBI" id="CHEBI:49883"/>
    </cofactor>
    <text evidence="1">Binds 1 [4Fe-4S] cluster. The cluster is coordinated with 3 cysteines and an exchangeable S-adenosyl-L-methionine.</text>
</comment>
<comment type="subcellular location">
    <subcellularLocation>
        <location evidence="1">Cytoplasm</location>
    </subcellularLocation>
</comment>
<comment type="miscellaneous">
    <text evidence="1">Reaction proceeds by a ping-pong mechanism involving intermediate methylation of a conserved cysteine residue.</text>
</comment>
<comment type="similarity">
    <text evidence="1">Belongs to the radical SAM superfamily. RlmN family.</text>
</comment>